<dbReference type="EMBL" id="AF178757">
    <property type="protein sequence ID" value="AAA22020.1"/>
    <property type="molecule type" value="Genomic_DNA"/>
</dbReference>
<dbReference type="EMBL" id="BA000019">
    <property type="protein sequence ID" value="BAB72485.1"/>
    <property type="molecule type" value="Genomic_DNA"/>
</dbReference>
<dbReference type="PIR" id="AF1872">
    <property type="entry name" value="AF1872"/>
</dbReference>
<dbReference type="PIR" id="E41841">
    <property type="entry name" value="E41841"/>
</dbReference>
<dbReference type="RefSeq" id="WP_010994703.1">
    <property type="nucleotide sequence ID" value="NZ_RSCN01000059.1"/>
</dbReference>
<dbReference type="SMR" id="P35798"/>
<dbReference type="STRING" id="103690.gene:10492538"/>
<dbReference type="KEGG" id="ana:alr0527"/>
<dbReference type="eggNOG" id="COG1413">
    <property type="taxonomic scope" value="Bacteria"/>
</dbReference>
<dbReference type="BioCyc" id="MetaCyc:MONOMER-18977"/>
<dbReference type="BRENDA" id="4.4.1.31">
    <property type="organism ID" value="4371"/>
</dbReference>
<dbReference type="Proteomes" id="UP000002483">
    <property type="component" value="Chromosome"/>
</dbReference>
<dbReference type="GO" id="GO:0030089">
    <property type="term" value="C:phycobilisome"/>
    <property type="evidence" value="ECO:0007669"/>
    <property type="project" value="UniProtKB-KW"/>
</dbReference>
<dbReference type="GO" id="GO:0016829">
    <property type="term" value="F:lyase activity"/>
    <property type="evidence" value="ECO:0007669"/>
    <property type="project" value="UniProtKB-KW"/>
</dbReference>
<dbReference type="GO" id="GO:0016491">
    <property type="term" value="F:oxidoreductase activity"/>
    <property type="evidence" value="ECO:0007669"/>
    <property type="project" value="TreeGrafter"/>
</dbReference>
<dbReference type="Gene3D" id="1.25.10.10">
    <property type="entry name" value="Leucine-rich Repeat Variant"/>
    <property type="match status" value="1"/>
</dbReference>
<dbReference type="InterPro" id="IPR011989">
    <property type="entry name" value="ARM-like"/>
</dbReference>
<dbReference type="InterPro" id="IPR016024">
    <property type="entry name" value="ARM-type_fold"/>
</dbReference>
<dbReference type="InterPro" id="IPR004155">
    <property type="entry name" value="PBS_lyase_HEAT"/>
</dbReference>
<dbReference type="PANTHER" id="PTHR12697:SF38">
    <property type="entry name" value="PBS LYASE HEAT DOMAIN PROTEIN REPEAT-CONTAINING PROTEIN"/>
    <property type="match status" value="1"/>
</dbReference>
<dbReference type="PANTHER" id="PTHR12697">
    <property type="entry name" value="PBS LYASE HEAT-LIKE PROTEIN"/>
    <property type="match status" value="1"/>
</dbReference>
<dbReference type="Pfam" id="PF13646">
    <property type="entry name" value="HEAT_2"/>
    <property type="match status" value="1"/>
</dbReference>
<dbReference type="SMART" id="SM00567">
    <property type="entry name" value="EZ_HEAT"/>
    <property type="match status" value="4"/>
</dbReference>
<dbReference type="SUPFAM" id="SSF48371">
    <property type="entry name" value="ARM repeat"/>
    <property type="match status" value="1"/>
</dbReference>
<protein>
    <recommendedName>
        <fullName>Bilin biosynthesis protein PecF</fullName>
    </recommendedName>
</protein>
<reference key="1">
    <citation type="journal article" date="1992" name="J. Bacteriol.">
        <title>Genes encoding the phycobilisome rod substructure are clustered on the Anabaena chromosome: characterization of the phycoerythrocyanin operon.</title>
        <authorList>
            <person name="Swanson R.V."/>
            <person name="de Lorimier R."/>
            <person name="Glazer A.N."/>
        </authorList>
    </citation>
    <scope>NUCLEOTIDE SEQUENCE [GENOMIC DNA]</scope>
</reference>
<reference key="2">
    <citation type="journal article" date="2001" name="DNA Res.">
        <title>Complete genomic sequence of the filamentous nitrogen-fixing cyanobacterium Anabaena sp. strain PCC 7120.</title>
        <authorList>
            <person name="Kaneko T."/>
            <person name="Nakamura Y."/>
            <person name="Wolk C.P."/>
            <person name="Kuritz T."/>
            <person name="Sasamoto S."/>
            <person name="Watanabe A."/>
            <person name="Iriguchi M."/>
            <person name="Ishikawa A."/>
            <person name="Kawashima K."/>
            <person name="Kimura T."/>
            <person name="Kishida Y."/>
            <person name="Kohara M."/>
            <person name="Matsumoto M."/>
            <person name="Matsuno A."/>
            <person name="Muraki A."/>
            <person name="Nakazaki N."/>
            <person name="Shimpo S."/>
            <person name="Sugimoto M."/>
            <person name="Takazawa M."/>
            <person name="Yamada M."/>
            <person name="Yasuda M."/>
            <person name="Tabata S."/>
        </authorList>
    </citation>
    <scope>NUCLEOTIDE SEQUENCE [LARGE SCALE GENOMIC DNA]</scope>
    <source>
        <strain>PCC 7120 / SAG 25.82 / UTEX 2576</strain>
    </source>
</reference>
<organism>
    <name type="scientific">Nostoc sp. (strain PCC 7120 / SAG 25.82 / UTEX 2576)</name>
    <dbReference type="NCBI Taxonomy" id="103690"/>
    <lineage>
        <taxon>Bacteria</taxon>
        <taxon>Bacillati</taxon>
        <taxon>Cyanobacteriota</taxon>
        <taxon>Cyanophyceae</taxon>
        <taxon>Nostocales</taxon>
        <taxon>Nostocaceae</taxon>
        <taxon>Nostoc</taxon>
    </lineage>
</organism>
<gene>
    <name type="primary">pecF</name>
    <name type="ordered locus">alr0527</name>
</gene>
<feature type="chain" id="PRO_0000199283" description="Bilin biosynthesis protein PecF">
    <location>
        <begin position="1"/>
        <end position="173"/>
    </location>
</feature>
<proteinExistence type="inferred from homology"/>
<keyword id="KW-0042">Antenna complex</keyword>
<keyword id="KW-0456">Lyase</keyword>
<keyword id="KW-0605">Phycobilisome</keyword>
<keyword id="KW-1185">Reference proteome</keyword>
<comment type="function">
    <text>An enzyme involved in the biosynthesis of bilin.</text>
</comment>
<comment type="similarity">
    <text evidence="1">Belongs to the CpcE/RpcE/PecE family.</text>
</comment>
<name>PECF_NOSS1</name>
<sequence length="173" mass="18467">MNQASLSVDAITNLIEAFHHHHPAVRSAAVDELIKLGSITVNLLIAAYDDSQDQGFQAQIIQVLAQIGDAKALKLLAEVVGTSVANHCQGNVRRIAARGLGKIASTTSNTEIINNAQEKLIWALLTPEDWGLRYAAAVSLQEIATPKAKAALQQAIAQETDPVVRSRMAIALS</sequence>
<accession>P35798</accession>
<evidence type="ECO:0000305" key="1"/>